<protein>
    <recommendedName>
        <fullName>LysM and putative peptidoglycan-binding domain-containing protein 2</fullName>
    </recommendedName>
</protein>
<proteinExistence type="evidence at protein level"/>
<feature type="initiator methionine" description="Removed" evidence="1">
    <location>
        <position position="1"/>
    </location>
</feature>
<feature type="chain" id="PRO_0000248003" description="LysM and putative peptidoglycan-binding domain-containing protein 2">
    <location>
        <begin position="2"/>
        <end position="215"/>
    </location>
</feature>
<feature type="domain" description="LysM" evidence="2">
    <location>
        <begin position="71"/>
        <end position="115"/>
    </location>
</feature>
<feature type="region of interest" description="Disordered" evidence="3">
    <location>
        <begin position="1"/>
        <end position="40"/>
    </location>
</feature>
<feature type="region of interest" description="Disordered" evidence="3">
    <location>
        <begin position="135"/>
        <end position="176"/>
    </location>
</feature>
<feature type="region of interest" description="Disordered" evidence="3">
    <location>
        <begin position="195"/>
        <end position="215"/>
    </location>
</feature>
<feature type="compositionally biased region" description="Acidic residues" evidence="3">
    <location>
        <begin position="145"/>
        <end position="156"/>
    </location>
</feature>
<feature type="compositionally biased region" description="Pro residues" evidence="3">
    <location>
        <begin position="157"/>
        <end position="169"/>
    </location>
</feature>
<feature type="compositionally biased region" description="Basic and acidic residues" evidence="3">
    <location>
        <begin position="196"/>
        <end position="205"/>
    </location>
</feature>
<feature type="modified residue" description="N-acetylalanine" evidence="1">
    <location>
        <position position="2"/>
    </location>
</feature>
<feature type="modified residue" description="Phosphoserine" evidence="1">
    <location>
        <position position="5"/>
    </location>
</feature>
<feature type="modified residue" description="Phosphoserine" evidence="1">
    <location>
        <position position="24"/>
    </location>
</feature>
<feature type="modified residue" description="Phosphoserine" evidence="6">
    <location>
        <position position="33"/>
    </location>
</feature>
<feature type="modified residue" description="Phosphoserine" evidence="1">
    <location>
        <position position="57"/>
    </location>
</feature>
<feature type="splice variant" id="VSP_020124" description="In isoform 2." evidence="4">
    <location>
        <begin position="1"/>
        <end position="91"/>
    </location>
</feature>
<feature type="sequence conflict" description="In Ref. 1; BAB25902." evidence="5" ref="1">
    <original>TNDC</original>
    <variation>NNER</variation>
    <location>
        <begin position="103"/>
        <end position="106"/>
    </location>
</feature>
<feature type="sequence conflict" description="In Ref. 1; BAB25902." evidence="5" ref="1">
    <original>F</original>
    <variation>L</variation>
    <location>
        <position position="143"/>
    </location>
</feature>
<feature type="sequence conflict" description="In Ref. 1; BAB25902." evidence="5" ref="1">
    <original>E</original>
    <variation>D</variation>
    <location>
        <position position="148"/>
    </location>
</feature>
<feature type="sequence conflict" description="In Ref. 1; BAB25902." evidence="5" ref="1">
    <original>D</original>
    <variation>E</variation>
    <location>
        <position position="165"/>
    </location>
</feature>
<feature type="sequence conflict" description="In Ref. 1; BAB25902." evidence="5" ref="1">
    <original>P</original>
    <variation>L</variation>
    <location>
        <position position="171"/>
    </location>
</feature>
<feature type="sequence conflict" description="In Ref. 1; BAB25902." evidence="5" ref="1">
    <original>Q</original>
    <variation>H</variation>
    <location>
        <position position="181"/>
    </location>
</feature>
<feature type="sequence conflict" description="In Ref. 1; BAB25902." evidence="5" ref="1">
    <original>K</original>
    <variation>E</variation>
    <location>
        <position position="196"/>
    </location>
</feature>
<name>LYSM2_MOUSE</name>
<keyword id="KW-0007">Acetylation</keyword>
<keyword id="KW-0025">Alternative splicing</keyword>
<keyword id="KW-0597">Phosphoprotein</keyword>
<keyword id="KW-1185">Reference proteome</keyword>
<sequence length="215" mass="23694">MADLSPAPALREGGPRAHRPSAPSPPPRSRSTSEPEEAELSLSLARTKTRSYGSTASVRAPLGARVIERHVEHRVRAGDTLQGIALKYGVTMEQIKRANKLFTNDCIFLKKTLSIPILSEKPLLFNGLNSIDSPESETVDSSFCQEEEPVVSEEELPPPSPQDPDPKPAQPEEVSARDFLQRLDLQIKLSTQAARKLKEESRDEESPYAASLYHS</sequence>
<reference key="1">
    <citation type="journal article" date="2005" name="Science">
        <title>The transcriptional landscape of the mammalian genome.</title>
        <authorList>
            <person name="Carninci P."/>
            <person name="Kasukawa T."/>
            <person name="Katayama S."/>
            <person name="Gough J."/>
            <person name="Frith M.C."/>
            <person name="Maeda N."/>
            <person name="Oyama R."/>
            <person name="Ravasi T."/>
            <person name="Lenhard B."/>
            <person name="Wells C."/>
            <person name="Kodzius R."/>
            <person name="Shimokawa K."/>
            <person name="Bajic V.B."/>
            <person name="Brenner S.E."/>
            <person name="Batalov S."/>
            <person name="Forrest A.R."/>
            <person name="Zavolan M."/>
            <person name="Davis M.J."/>
            <person name="Wilming L.G."/>
            <person name="Aidinis V."/>
            <person name="Allen J.E."/>
            <person name="Ambesi-Impiombato A."/>
            <person name="Apweiler R."/>
            <person name="Aturaliya R.N."/>
            <person name="Bailey T.L."/>
            <person name="Bansal M."/>
            <person name="Baxter L."/>
            <person name="Beisel K.W."/>
            <person name="Bersano T."/>
            <person name="Bono H."/>
            <person name="Chalk A.M."/>
            <person name="Chiu K.P."/>
            <person name="Choudhary V."/>
            <person name="Christoffels A."/>
            <person name="Clutterbuck D.R."/>
            <person name="Crowe M.L."/>
            <person name="Dalla E."/>
            <person name="Dalrymple B.P."/>
            <person name="de Bono B."/>
            <person name="Della Gatta G."/>
            <person name="di Bernardo D."/>
            <person name="Down T."/>
            <person name="Engstrom P."/>
            <person name="Fagiolini M."/>
            <person name="Faulkner G."/>
            <person name="Fletcher C.F."/>
            <person name="Fukushima T."/>
            <person name="Furuno M."/>
            <person name="Futaki S."/>
            <person name="Gariboldi M."/>
            <person name="Georgii-Hemming P."/>
            <person name="Gingeras T.R."/>
            <person name="Gojobori T."/>
            <person name="Green R.E."/>
            <person name="Gustincich S."/>
            <person name="Harbers M."/>
            <person name="Hayashi Y."/>
            <person name="Hensch T.K."/>
            <person name="Hirokawa N."/>
            <person name="Hill D."/>
            <person name="Huminiecki L."/>
            <person name="Iacono M."/>
            <person name="Ikeo K."/>
            <person name="Iwama A."/>
            <person name="Ishikawa T."/>
            <person name="Jakt M."/>
            <person name="Kanapin A."/>
            <person name="Katoh M."/>
            <person name="Kawasawa Y."/>
            <person name="Kelso J."/>
            <person name="Kitamura H."/>
            <person name="Kitano H."/>
            <person name="Kollias G."/>
            <person name="Krishnan S.P."/>
            <person name="Kruger A."/>
            <person name="Kummerfeld S.K."/>
            <person name="Kurochkin I.V."/>
            <person name="Lareau L.F."/>
            <person name="Lazarevic D."/>
            <person name="Lipovich L."/>
            <person name="Liu J."/>
            <person name="Liuni S."/>
            <person name="McWilliam S."/>
            <person name="Madan Babu M."/>
            <person name="Madera M."/>
            <person name="Marchionni L."/>
            <person name="Matsuda H."/>
            <person name="Matsuzawa S."/>
            <person name="Miki H."/>
            <person name="Mignone F."/>
            <person name="Miyake S."/>
            <person name="Morris K."/>
            <person name="Mottagui-Tabar S."/>
            <person name="Mulder N."/>
            <person name="Nakano N."/>
            <person name="Nakauchi H."/>
            <person name="Ng P."/>
            <person name="Nilsson R."/>
            <person name="Nishiguchi S."/>
            <person name="Nishikawa S."/>
            <person name="Nori F."/>
            <person name="Ohara O."/>
            <person name="Okazaki Y."/>
            <person name="Orlando V."/>
            <person name="Pang K.C."/>
            <person name="Pavan W.J."/>
            <person name="Pavesi G."/>
            <person name="Pesole G."/>
            <person name="Petrovsky N."/>
            <person name="Piazza S."/>
            <person name="Reed J."/>
            <person name="Reid J.F."/>
            <person name="Ring B.Z."/>
            <person name="Ringwald M."/>
            <person name="Rost B."/>
            <person name="Ruan Y."/>
            <person name="Salzberg S.L."/>
            <person name="Sandelin A."/>
            <person name="Schneider C."/>
            <person name="Schoenbach C."/>
            <person name="Sekiguchi K."/>
            <person name="Semple C.A."/>
            <person name="Seno S."/>
            <person name="Sessa L."/>
            <person name="Sheng Y."/>
            <person name="Shibata Y."/>
            <person name="Shimada H."/>
            <person name="Shimada K."/>
            <person name="Silva D."/>
            <person name="Sinclair B."/>
            <person name="Sperling S."/>
            <person name="Stupka E."/>
            <person name="Sugiura K."/>
            <person name="Sultana R."/>
            <person name="Takenaka Y."/>
            <person name="Taki K."/>
            <person name="Tammoja K."/>
            <person name="Tan S.L."/>
            <person name="Tang S."/>
            <person name="Taylor M.S."/>
            <person name="Tegner J."/>
            <person name="Teichmann S.A."/>
            <person name="Ueda H.R."/>
            <person name="van Nimwegen E."/>
            <person name="Verardo R."/>
            <person name="Wei C.L."/>
            <person name="Yagi K."/>
            <person name="Yamanishi H."/>
            <person name="Zabarovsky E."/>
            <person name="Zhu S."/>
            <person name="Zimmer A."/>
            <person name="Hide W."/>
            <person name="Bult C."/>
            <person name="Grimmond S.M."/>
            <person name="Teasdale R.D."/>
            <person name="Liu E.T."/>
            <person name="Brusic V."/>
            <person name="Quackenbush J."/>
            <person name="Wahlestedt C."/>
            <person name="Mattick J.S."/>
            <person name="Hume D.A."/>
            <person name="Kai C."/>
            <person name="Sasaki D."/>
            <person name="Tomaru Y."/>
            <person name="Fukuda S."/>
            <person name="Kanamori-Katayama M."/>
            <person name="Suzuki M."/>
            <person name="Aoki J."/>
            <person name="Arakawa T."/>
            <person name="Iida J."/>
            <person name="Imamura K."/>
            <person name="Itoh M."/>
            <person name="Kato T."/>
            <person name="Kawaji H."/>
            <person name="Kawagashira N."/>
            <person name="Kawashima T."/>
            <person name="Kojima M."/>
            <person name="Kondo S."/>
            <person name="Konno H."/>
            <person name="Nakano K."/>
            <person name="Ninomiya N."/>
            <person name="Nishio T."/>
            <person name="Okada M."/>
            <person name="Plessy C."/>
            <person name="Shibata K."/>
            <person name="Shiraki T."/>
            <person name="Suzuki S."/>
            <person name="Tagami M."/>
            <person name="Waki K."/>
            <person name="Watahiki A."/>
            <person name="Okamura-Oho Y."/>
            <person name="Suzuki H."/>
            <person name="Kawai J."/>
            <person name="Hayashizaki Y."/>
        </authorList>
    </citation>
    <scope>NUCLEOTIDE SEQUENCE [LARGE SCALE MRNA]</scope>
    <source>
        <strain>C57BL/6J</strain>
        <tissue>Stomach</tissue>
    </source>
</reference>
<reference key="2">
    <citation type="journal article" date="2004" name="Genome Res.">
        <title>The status, quality, and expansion of the NIH full-length cDNA project: the Mammalian Gene Collection (MGC).</title>
        <authorList>
            <consortium name="The MGC Project Team"/>
        </authorList>
    </citation>
    <scope>NUCLEOTIDE SEQUENCE [LARGE SCALE MRNA] (ISOFORM 2)</scope>
    <source>
        <tissue>Brain</tissue>
    </source>
</reference>
<reference key="3">
    <citation type="journal article" date="2010" name="Cell">
        <title>A tissue-specific atlas of mouse protein phosphorylation and expression.</title>
        <authorList>
            <person name="Huttlin E.L."/>
            <person name="Jedrychowski M.P."/>
            <person name="Elias J.E."/>
            <person name="Goswami T."/>
            <person name="Rad R."/>
            <person name="Beausoleil S.A."/>
            <person name="Villen J."/>
            <person name="Haas W."/>
            <person name="Sowa M.E."/>
            <person name="Gygi S.P."/>
        </authorList>
    </citation>
    <scope>PHOSPHORYLATION [LARGE SCALE ANALYSIS] AT SER-33</scope>
    <scope>IDENTIFICATION BY MASS SPECTROMETRY [LARGE SCALE ANALYSIS]</scope>
    <source>
        <tissue>Brain</tissue>
        <tissue>Lung</tissue>
        <tissue>Testis</tissue>
    </source>
</reference>
<comment type="alternative products">
    <event type="alternative splicing"/>
    <isoform>
        <id>Q9D7V2-1</id>
        <name>1</name>
        <sequence type="displayed"/>
    </isoform>
    <isoform>
        <id>Q9D7V2-2</id>
        <name>2</name>
        <sequence type="described" ref="VSP_020124"/>
    </isoform>
</comment>
<gene>
    <name type="primary">Lysmd2</name>
</gene>
<evidence type="ECO:0000250" key="1">
    <source>
        <dbReference type="UniProtKB" id="Q8IV50"/>
    </source>
</evidence>
<evidence type="ECO:0000255" key="2">
    <source>
        <dbReference type="PROSITE-ProRule" id="PRU01118"/>
    </source>
</evidence>
<evidence type="ECO:0000256" key="3">
    <source>
        <dbReference type="SAM" id="MobiDB-lite"/>
    </source>
</evidence>
<evidence type="ECO:0000303" key="4">
    <source>
    </source>
</evidence>
<evidence type="ECO:0000305" key="5"/>
<evidence type="ECO:0007744" key="6">
    <source>
    </source>
</evidence>
<dbReference type="EMBL" id="AK008800">
    <property type="protein sequence ID" value="BAB25902.1"/>
    <property type="molecule type" value="mRNA"/>
</dbReference>
<dbReference type="EMBL" id="BC048545">
    <property type="protein sequence ID" value="AAH48545.1"/>
    <property type="molecule type" value="mRNA"/>
</dbReference>
<dbReference type="CCDS" id="CCDS40693.1">
    <molecule id="Q9D7V2-1"/>
</dbReference>
<dbReference type="RefSeq" id="XP_006511494.1">
    <molecule id="Q9D7V2-2"/>
    <property type="nucleotide sequence ID" value="XM_006511431.2"/>
</dbReference>
<dbReference type="SMR" id="Q9D7V2"/>
<dbReference type="BioGRID" id="213854">
    <property type="interactions" value="1"/>
</dbReference>
<dbReference type="FunCoup" id="Q9D7V2">
    <property type="interactions" value="5"/>
</dbReference>
<dbReference type="STRING" id="10090.ENSMUSP00000034702"/>
<dbReference type="iPTMnet" id="Q9D7V2"/>
<dbReference type="PhosphoSitePlus" id="Q9D7V2"/>
<dbReference type="jPOST" id="Q9D7V2"/>
<dbReference type="PaxDb" id="10090-ENSMUSP00000034702"/>
<dbReference type="PeptideAtlas" id="Q9D7V2"/>
<dbReference type="ProteomicsDB" id="292153">
    <molecule id="Q9D7V2-1"/>
</dbReference>
<dbReference type="ProteomicsDB" id="292154">
    <molecule id="Q9D7V2-2"/>
</dbReference>
<dbReference type="Pumba" id="Q9D7V2"/>
<dbReference type="DNASU" id="70082"/>
<dbReference type="GeneID" id="70082"/>
<dbReference type="UCSC" id="uc009qsr.1">
    <molecule id="Q9D7V2-1"/>
    <property type="organism name" value="mouse"/>
</dbReference>
<dbReference type="AGR" id="MGI:1917332"/>
<dbReference type="CTD" id="256586"/>
<dbReference type="MGI" id="MGI:1917332">
    <property type="gene designation" value="Lysmd2"/>
</dbReference>
<dbReference type="eggNOG" id="ENOG502S0XR">
    <property type="taxonomic scope" value="Eukaryota"/>
</dbReference>
<dbReference type="InParanoid" id="Q9D7V2"/>
<dbReference type="OrthoDB" id="2107166at2759"/>
<dbReference type="PhylomeDB" id="Q9D7V2"/>
<dbReference type="BioGRID-ORCS" id="70082">
    <property type="hits" value="5 hits in 77 CRISPR screens"/>
</dbReference>
<dbReference type="PRO" id="PR:Q9D7V2"/>
<dbReference type="Proteomes" id="UP000000589">
    <property type="component" value="Unplaced"/>
</dbReference>
<dbReference type="RNAct" id="Q9D7V2">
    <property type="molecule type" value="protein"/>
</dbReference>
<dbReference type="CDD" id="cd00118">
    <property type="entry name" value="LysM"/>
    <property type="match status" value="1"/>
</dbReference>
<dbReference type="Gene3D" id="3.10.350.10">
    <property type="entry name" value="LysM domain"/>
    <property type="match status" value="1"/>
</dbReference>
<dbReference type="InterPro" id="IPR045030">
    <property type="entry name" value="LYSM1-4"/>
</dbReference>
<dbReference type="InterPro" id="IPR018392">
    <property type="entry name" value="LysM_dom"/>
</dbReference>
<dbReference type="InterPro" id="IPR036779">
    <property type="entry name" value="LysM_dom_sf"/>
</dbReference>
<dbReference type="PANTHER" id="PTHR20932:SF4">
    <property type="entry name" value="AND PUTATIVE PEPTIDOGLYCAN-BINDING DOMAIN-CONTAINING PROTEIN 2-RELATED"/>
    <property type="match status" value="1"/>
</dbReference>
<dbReference type="PANTHER" id="PTHR20932">
    <property type="entry name" value="LYSM AND PUTATIVE PEPTIDOGLYCAN-BINDING DOMAIN-CONTAINING PROTEIN"/>
    <property type="match status" value="1"/>
</dbReference>
<dbReference type="Pfam" id="PF01476">
    <property type="entry name" value="LysM"/>
    <property type="match status" value="1"/>
</dbReference>
<dbReference type="SMART" id="SM00257">
    <property type="entry name" value="LysM"/>
    <property type="match status" value="1"/>
</dbReference>
<dbReference type="SUPFAM" id="SSF54106">
    <property type="entry name" value="LysM domain"/>
    <property type="match status" value="1"/>
</dbReference>
<dbReference type="PROSITE" id="PS51782">
    <property type="entry name" value="LYSM"/>
    <property type="match status" value="1"/>
</dbReference>
<accession>Q9D7V2</accession>
<accession>Q80ZR2</accession>
<organism>
    <name type="scientific">Mus musculus</name>
    <name type="common">Mouse</name>
    <dbReference type="NCBI Taxonomy" id="10090"/>
    <lineage>
        <taxon>Eukaryota</taxon>
        <taxon>Metazoa</taxon>
        <taxon>Chordata</taxon>
        <taxon>Craniata</taxon>
        <taxon>Vertebrata</taxon>
        <taxon>Euteleostomi</taxon>
        <taxon>Mammalia</taxon>
        <taxon>Eutheria</taxon>
        <taxon>Euarchontoglires</taxon>
        <taxon>Glires</taxon>
        <taxon>Rodentia</taxon>
        <taxon>Myomorpha</taxon>
        <taxon>Muroidea</taxon>
        <taxon>Muridae</taxon>
        <taxon>Murinae</taxon>
        <taxon>Mus</taxon>
        <taxon>Mus</taxon>
    </lineage>
</organism>